<proteinExistence type="inferred from homology"/>
<gene>
    <name evidence="1" type="primary">gfcR</name>
    <name evidence="2" type="synonym">pyrE1</name>
    <name type="ordered locus">OE_1672F</name>
</gene>
<accession>B0R3D9</accession>
<organism>
    <name type="scientific">Halobacterium salinarum (strain ATCC 29341 / DSM 671 / R1)</name>
    <dbReference type="NCBI Taxonomy" id="478009"/>
    <lineage>
        <taxon>Archaea</taxon>
        <taxon>Methanobacteriati</taxon>
        <taxon>Methanobacteriota</taxon>
        <taxon>Stenosarchaea group</taxon>
        <taxon>Halobacteria</taxon>
        <taxon>Halobacteriales</taxon>
        <taxon>Halobacteriaceae</taxon>
        <taxon>Halobacterium</taxon>
        <taxon>Halobacterium salinarum NRC-34001</taxon>
    </lineage>
</organism>
<sequence>MKNVDDLIDDAAALADRGLSRGEIADELNVSRETASWLVERADTNASVAATDTDDSPRDVHVDWSTIGEAGARLSAIGIALADALRDHSHDVDLVVGIEKAGVPLATATANELGTDLATYTPRKHQWDEGDMADLGGSFSRNFASVEDRDCFVVDDTVTSGTTITETIQAVREAGGTPVACGVLADKQGLGDVDGTPIEALLQVIRVGSGDD</sequence>
<dbReference type="EMBL" id="AM774415">
    <property type="protein sequence ID" value="CAP13253.1"/>
    <property type="molecule type" value="Genomic_DNA"/>
</dbReference>
<dbReference type="RefSeq" id="WP_010902287.1">
    <property type="nucleotide sequence ID" value="NC_010364.1"/>
</dbReference>
<dbReference type="SMR" id="B0R3D9"/>
<dbReference type="EnsemblBacteria" id="CAP13253">
    <property type="protein sequence ID" value="CAP13253"/>
    <property type="gene ID" value="OE_1672F"/>
</dbReference>
<dbReference type="GeneID" id="68693362"/>
<dbReference type="KEGG" id="hsl:OE_1672F"/>
<dbReference type="HOGENOM" id="CLU_111001_0_0_2"/>
<dbReference type="PhylomeDB" id="B0R3D9"/>
<dbReference type="Proteomes" id="UP000001321">
    <property type="component" value="Chromosome"/>
</dbReference>
<dbReference type="GO" id="GO:0003677">
    <property type="term" value="F:DNA binding"/>
    <property type="evidence" value="ECO:0007669"/>
    <property type="project" value="UniProtKB-UniRule"/>
</dbReference>
<dbReference type="GO" id="GO:0004588">
    <property type="term" value="F:orotate phosphoribosyltransferase activity"/>
    <property type="evidence" value="ECO:0007669"/>
    <property type="project" value="TreeGrafter"/>
</dbReference>
<dbReference type="GO" id="GO:0019856">
    <property type="term" value="P:pyrimidine nucleobase biosynthetic process"/>
    <property type="evidence" value="ECO:0007669"/>
    <property type="project" value="TreeGrafter"/>
</dbReference>
<dbReference type="GO" id="GO:0010468">
    <property type="term" value="P:regulation of gene expression"/>
    <property type="evidence" value="ECO:0007669"/>
    <property type="project" value="UniProtKB-UniRule"/>
</dbReference>
<dbReference type="GO" id="GO:0006222">
    <property type="term" value="P:UMP biosynthetic process"/>
    <property type="evidence" value="ECO:0007669"/>
    <property type="project" value="TreeGrafter"/>
</dbReference>
<dbReference type="CDD" id="cd06223">
    <property type="entry name" value="PRTases_typeI"/>
    <property type="match status" value="1"/>
</dbReference>
<dbReference type="Gene3D" id="3.40.50.2020">
    <property type="match status" value="1"/>
</dbReference>
<dbReference type="HAMAP" id="MF_01214">
    <property type="entry name" value="GfcR"/>
    <property type="match status" value="1"/>
</dbReference>
<dbReference type="InterPro" id="IPR053401">
    <property type="entry name" value="GcfR_halob"/>
</dbReference>
<dbReference type="InterPro" id="IPR022854">
    <property type="entry name" value="GfcR-like"/>
</dbReference>
<dbReference type="InterPro" id="IPR000836">
    <property type="entry name" value="PRibTrfase_dom"/>
</dbReference>
<dbReference type="InterPro" id="IPR029057">
    <property type="entry name" value="PRTase-like"/>
</dbReference>
<dbReference type="NCBIfam" id="NF002620">
    <property type="entry name" value="PRK02277.1"/>
    <property type="match status" value="1"/>
</dbReference>
<dbReference type="NCBIfam" id="NF045507">
    <property type="entry name" value="transregGfcR_Halo"/>
    <property type="match status" value="1"/>
</dbReference>
<dbReference type="PANTHER" id="PTHR19278">
    <property type="entry name" value="OROTATE PHOSPHORIBOSYLTRANSFERASE"/>
    <property type="match status" value="1"/>
</dbReference>
<dbReference type="PANTHER" id="PTHR19278:SF41">
    <property type="entry name" value="PYRE-LIKE PROTEIN"/>
    <property type="match status" value="1"/>
</dbReference>
<dbReference type="Pfam" id="PF00156">
    <property type="entry name" value="Pribosyltran"/>
    <property type="match status" value="1"/>
</dbReference>
<dbReference type="SUPFAM" id="SSF53271">
    <property type="entry name" value="PRTase-like"/>
    <property type="match status" value="1"/>
</dbReference>
<name>GFCR_HALS3</name>
<reference key="1">
    <citation type="journal article" date="2008" name="Genomics">
        <title>Evolution in the laboratory: the genome of Halobacterium salinarum strain R1 compared to that of strain NRC-1.</title>
        <authorList>
            <person name="Pfeiffer F."/>
            <person name="Schuster S.C."/>
            <person name="Broicher A."/>
            <person name="Falb M."/>
            <person name="Palm P."/>
            <person name="Rodewald K."/>
            <person name="Ruepp A."/>
            <person name="Soppa J."/>
            <person name="Tittor J."/>
            <person name="Oesterhelt D."/>
        </authorList>
    </citation>
    <scope>NUCLEOTIDE SEQUENCE [LARGE SCALE GENOMIC DNA]</scope>
    <source>
        <strain>ATCC 29341 / DSM 671 / R1</strain>
    </source>
</reference>
<protein>
    <recommendedName>
        <fullName evidence="1">Transcriptional regulator GfcR</fullName>
    </recommendedName>
</protein>
<keyword id="KW-0238">DNA-binding</keyword>
<keyword id="KW-0804">Transcription</keyword>
<keyword id="KW-0805">Transcription regulation</keyword>
<comment type="function">
    <text evidence="1">DNA-binding transcriptional regulator that functions as a regulator of central sugar catabolic pathways.</text>
</comment>
<comment type="domain">
    <text evidence="1">Contains an N-terminal DNA-binding winged helix-turn-helix domain and a C-terminal regulatory domain (or effector binding domain) resembling phosphoribosyltransferase (PRT) domain.</text>
</comment>
<comment type="similarity">
    <text evidence="1">Belongs to the purine/pyrimidine phosphoribosyltransferase family. GfcR subfamily.</text>
</comment>
<evidence type="ECO:0000255" key="1">
    <source>
        <dbReference type="HAMAP-Rule" id="MF_01214"/>
    </source>
</evidence>
<evidence type="ECO:0000312" key="2">
    <source>
        <dbReference type="EMBL" id="CAP13253.1"/>
    </source>
</evidence>
<feature type="chain" id="PRO_1000138941" description="Transcriptional regulator GfcR">
    <location>
        <begin position="1"/>
        <end position="212"/>
    </location>
</feature>